<comment type="function">
    <text evidence="1">Catalyzes the irreversible NADPH-dependent deamination of GMP to IMP. It functions in the conversion of nucleobase, nucleoside and nucleotide derivatives of G to A nucleotides, and in maintaining the intracellular balance of A and G nucleotides.</text>
</comment>
<comment type="catalytic activity">
    <reaction evidence="1">
        <text>IMP + NH4(+) + NADP(+) = GMP + NADPH + 2 H(+)</text>
        <dbReference type="Rhea" id="RHEA:17185"/>
        <dbReference type="ChEBI" id="CHEBI:15378"/>
        <dbReference type="ChEBI" id="CHEBI:28938"/>
        <dbReference type="ChEBI" id="CHEBI:57783"/>
        <dbReference type="ChEBI" id="CHEBI:58053"/>
        <dbReference type="ChEBI" id="CHEBI:58115"/>
        <dbReference type="ChEBI" id="CHEBI:58349"/>
        <dbReference type="EC" id="1.7.1.7"/>
    </reaction>
</comment>
<comment type="subunit">
    <text evidence="1">Homotetramer.</text>
</comment>
<comment type="similarity">
    <text evidence="1">Belongs to the IMPDH/GMPR family. GuaC type 1 subfamily.</text>
</comment>
<organism>
    <name type="scientific">Vibrio vulnificus (strain CMCP6)</name>
    <dbReference type="NCBI Taxonomy" id="216895"/>
    <lineage>
        <taxon>Bacteria</taxon>
        <taxon>Pseudomonadati</taxon>
        <taxon>Pseudomonadota</taxon>
        <taxon>Gammaproteobacteria</taxon>
        <taxon>Vibrionales</taxon>
        <taxon>Vibrionaceae</taxon>
        <taxon>Vibrio</taxon>
    </lineage>
</organism>
<gene>
    <name evidence="1" type="primary">guaC</name>
    <name type="ordered locus">VV2_0712</name>
</gene>
<dbReference type="EC" id="1.7.1.7" evidence="1"/>
<dbReference type="EMBL" id="AE016796">
    <property type="protein sequence ID" value="AAO07647.1"/>
    <property type="molecule type" value="Genomic_DNA"/>
</dbReference>
<dbReference type="RefSeq" id="WP_011081644.1">
    <property type="nucleotide sequence ID" value="NC_004460.2"/>
</dbReference>
<dbReference type="SMR" id="Q8D632"/>
<dbReference type="KEGG" id="vvu:VV2_0712"/>
<dbReference type="HOGENOM" id="CLU_022552_5_3_6"/>
<dbReference type="Proteomes" id="UP000002275">
    <property type="component" value="Chromosome 2"/>
</dbReference>
<dbReference type="GO" id="GO:0005829">
    <property type="term" value="C:cytosol"/>
    <property type="evidence" value="ECO:0007669"/>
    <property type="project" value="TreeGrafter"/>
</dbReference>
<dbReference type="GO" id="GO:1902560">
    <property type="term" value="C:GMP reductase complex"/>
    <property type="evidence" value="ECO:0007669"/>
    <property type="project" value="InterPro"/>
</dbReference>
<dbReference type="GO" id="GO:0003920">
    <property type="term" value="F:GMP reductase activity"/>
    <property type="evidence" value="ECO:0007669"/>
    <property type="project" value="UniProtKB-UniRule"/>
</dbReference>
<dbReference type="GO" id="GO:0046872">
    <property type="term" value="F:metal ion binding"/>
    <property type="evidence" value="ECO:0007669"/>
    <property type="project" value="UniProtKB-KW"/>
</dbReference>
<dbReference type="GO" id="GO:0006163">
    <property type="term" value="P:purine nucleotide metabolic process"/>
    <property type="evidence" value="ECO:0007669"/>
    <property type="project" value="UniProtKB-UniRule"/>
</dbReference>
<dbReference type="CDD" id="cd00381">
    <property type="entry name" value="IMPDH"/>
    <property type="match status" value="1"/>
</dbReference>
<dbReference type="FunFam" id="3.20.20.70:FF:000012">
    <property type="entry name" value="GMP reductase"/>
    <property type="match status" value="1"/>
</dbReference>
<dbReference type="Gene3D" id="3.20.20.70">
    <property type="entry name" value="Aldolase class I"/>
    <property type="match status" value="1"/>
</dbReference>
<dbReference type="HAMAP" id="MF_00596">
    <property type="entry name" value="GMP_reduct_type1"/>
    <property type="match status" value="1"/>
</dbReference>
<dbReference type="InterPro" id="IPR013785">
    <property type="entry name" value="Aldolase_TIM"/>
</dbReference>
<dbReference type="InterPro" id="IPR050139">
    <property type="entry name" value="GMP_reductase"/>
</dbReference>
<dbReference type="InterPro" id="IPR005993">
    <property type="entry name" value="GMPR"/>
</dbReference>
<dbReference type="InterPro" id="IPR015875">
    <property type="entry name" value="IMP_DH/GMP_Rdtase_CS"/>
</dbReference>
<dbReference type="InterPro" id="IPR001093">
    <property type="entry name" value="IMP_DH_GMPRt"/>
</dbReference>
<dbReference type="NCBIfam" id="TIGR01305">
    <property type="entry name" value="GMP_reduct_1"/>
    <property type="match status" value="1"/>
</dbReference>
<dbReference type="NCBIfam" id="NF003470">
    <property type="entry name" value="PRK05096.1"/>
    <property type="match status" value="1"/>
</dbReference>
<dbReference type="PANTHER" id="PTHR43170">
    <property type="entry name" value="GMP REDUCTASE"/>
    <property type="match status" value="1"/>
</dbReference>
<dbReference type="PANTHER" id="PTHR43170:SF5">
    <property type="entry name" value="GMP REDUCTASE"/>
    <property type="match status" value="1"/>
</dbReference>
<dbReference type="Pfam" id="PF00478">
    <property type="entry name" value="IMPDH"/>
    <property type="match status" value="1"/>
</dbReference>
<dbReference type="PIRSF" id="PIRSF000235">
    <property type="entry name" value="GMP_reductase"/>
    <property type="match status" value="1"/>
</dbReference>
<dbReference type="SMART" id="SM01240">
    <property type="entry name" value="IMPDH"/>
    <property type="match status" value="1"/>
</dbReference>
<dbReference type="SUPFAM" id="SSF51412">
    <property type="entry name" value="Inosine monophosphate dehydrogenase (IMPDH)"/>
    <property type="match status" value="1"/>
</dbReference>
<dbReference type="PROSITE" id="PS00487">
    <property type="entry name" value="IMP_DH_GMP_RED"/>
    <property type="match status" value="1"/>
</dbReference>
<name>GUAC_VIBVU</name>
<reference key="1">
    <citation type="submission" date="2002-12" db="EMBL/GenBank/DDBJ databases">
        <title>Complete genome sequence of Vibrio vulnificus CMCP6.</title>
        <authorList>
            <person name="Rhee J.H."/>
            <person name="Kim S.Y."/>
            <person name="Chung S.S."/>
            <person name="Kim J.J."/>
            <person name="Moon Y.H."/>
            <person name="Jeong H."/>
            <person name="Choy H.E."/>
        </authorList>
    </citation>
    <scope>NUCLEOTIDE SEQUENCE [LARGE SCALE GENOMIC DNA]</scope>
    <source>
        <strain>CMCP6</strain>
    </source>
</reference>
<feature type="chain" id="PRO_0000093743" description="GMP reductase">
    <location>
        <begin position="1"/>
        <end position="348"/>
    </location>
</feature>
<feature type="active site" description="Thioimidate intermediate" evidence="1">
    <location>
        <position position="186"/>
    </location>
</feature>
<feature type="binding site" evidence="1">
    <location>
        <begin position="108"/>
        <end position="131"/>
    </location>
    <ligand>
        <name>NADP(+)</name>
        <dbReference type="ChEBI" id="CHEBI:58349"/>
    </ligand>
</feature>
<feature type="binding site" evidence="1">
    <location>
        <position position="181"/>
    </location>
    <ligand>
        <name>K(+)</name>
        <dbReference type="ChEBI" id="CHEBI:29103"/>
    </ligand>
</feature>
<feature type="binding site" evidence="1">
    <location>
        <position position="183"/>
    </location>
    <ligand>
        <name>K(+)</name>
        <dbReference type="ChEBI" id="CHEBI:29103"/>
    </ligand>
</feature>
<feature type="binding site" evidence="1">
    <location>
        <begin position="216"/>
        <end position="239"/>
    </location>
    <ligand>
        <name>NADP(+)</name>
        <dbReference type="ChEBI" id="CHEBI:58349"/>
    </ligand>
</feature>
<proteinExistence type="inferred from homology"/>
<keyword id="KW-0479">Metal-binding</keyword>
<keyword id="KW-0521">NADP</keyword>
<keyword id="KW-0560">Oxidoreductase</keyword>
<keyword id="KW-0630">Potassium</keyword>
<protein>
    <recommendedName>
        <fullName evidence="1">GMP reductase</fullName>
        <ecNumber evidence="1">1.7.1.7</ecNumber>
    </recommendedName>
    <alternativeName>
        <fullName evidence="1">Guanosine 5'-monophosphate oxidoreductase</fullName>
        <shortName evidence="1">Guanosine monophosphate reductase</shortName>
    </alternativeName>
</protein>
<sequence>MRIEQELKLGFKDVLFRPKRSTLKSRSQVNLTREFTFKHSGRQWSGVPVIAANMDSVGSFEMAKALSQHGVMTAIHKHYTVQDWADFVKDADSETLNKVMVSTGTSEADFQKTKDVMALSDELIFICIDIANGYSEHLVQYVQQVRAAFPDKVISAGNVVTGDMVEELILAGADIVKVGIGPGSVCTTRVKTGVGYPQLSAIIECADAAHGLGGRIIGDGGCACAGDVAKAFGGGADFVMLGGMLAGHEESGGEIVLKDGESYMKFYGMSSKSAMDKHSGGVAGYRAAEGKTVLLPYRGSVHGTIQDILGGVRSTCTYVGAAELRELTKRTTFIRVLEQENNVFGKEK</sequence>
<evidence type="ECO:0000255" key="1">
    <source>
        <dbReference type="HAMAP-Rule" id="MF_00596"/>
    </source>
</evidence>
<accession>Q8D632</accession>